<proteinExistence type="inferred from homology"/>
<comment type="function">
    <text evidence="1">Catalyzes two activities which are involved in the cyclic version of arginine biosynthesis: the synthesis of N-acetylglutamate from glutamate and acetyl-CoA as the acetyl donor, and of ornithine by transacetylation between N(2)-acetylornithine and glutamate.</text>
</comment>
<comment type="catalytic activity">
    <reaction evidence="1">
        <text>N(2)-acetyl-L-ornithine + L-glutamate = N-acetyl-L-glutamate + L-ornithine</text>
        <dbReference type="Rhea" id="RHEA:15349"/>
        <dbReference type="ChEBI" id="CHEBI:29985"/>
        <dbReference type="ChEBI" id="CHEBI:44337"/>
        <dbReference type="ChEBI" id="CHEBI:46911"/>
        <dbReference type="ChEBI" id="CHEBI:57805"/>
        <dbReference type="EC" id="2.3.1.35"/>
    </reaction>
</comment>
<comment type="catalytic activity">
    <reaction evidence="1">
        <text>L-glutamate + acetyl-CoA = N-acetyl-L-glutamate + CoA + H(+)</text>
        <dbReference type="Rhea" id="RHEA:24292"/>
        <dbReference type="ChEBI" id="CHEBI:15378"/>
        <dbReference type="ChEBI" id="CHEBI:29985"/>
        <dbReference type="ChEBI" id="CHEBI:44337"/>
        <dbReference type="ChEBI" id="CHEBI:57287"/>
        <dbReference type="ChEBI" id="CHEBI:57288"/>
        <dbReference type="EC" id="2.3.1.1"/>
    </reaction>
</comment>
<comment type="pathway">
    <text evidence="1">Amino-acid biosynthesis; L-arginine biosynthesis; L-ornithine and N-acetyl-L-glutamate from L-glutamate and N(2)-acetyl-L-ornithine (cyclic): step 1/1.</text>
</comment>
<comment type="pathway">
    <text evidence="1">Amino-acid biosynthesis; L-arginine biosynthesis; N(2)-acetyl-L-ornithine from L-glutamate: step 1/4.</text>
</comment>
<comment type="subunit">
    <text evidence="1">Heterotetramer of two alpha and two beta chains.</text>
</comment>
<comment type="subcellular location">
    <subcellularLocation>
        <location evidence="1">Cytoplasm</location>
    </subcellularLocation>
</comment>
<comment type="similarity">
    <text evidence="1">Belongs to the ArgJ family.</text>
</comment>
<sequence length="409" mass="43340">MPVNIPPLLPEQLLPIPGLSLGTAEASIKRPGRKDILVITLAENTRVAGVFTRNRFCAAPVTVARSHLTGSLPIRALVINTGNANAGTGQSGIDHAHATCASLARLIGCQTQQVLPFSTGVIMEPLPVEKIITHLPQALANLAPDNWFAAAQAIMTTDIVPKGVSRQIQINGTTVTITGIAKGSGMIHPNMATMLGYIATDAAVTQPLLDDLVRYATDRSFNCVTVDGDTSTNDALILMATGQAGNTPITVSTDPAFISLQAAITEVAALLAQMIVRDGEGATKFITVQVESGKTREECTKVAYAIAHSPLIKTACFASDPNLGRILAAIGYAGIEDLDVNLVQLYLGNILVAEHGGRAASYREEDGQRIMQAPEITIQVKLNRGNASTTVWTCDLSYDYVKINADYRS</sequence>
<name>ARGJ_NITEU</name>
<accession>Q82SU1</accession>
<gene>
    <name evidence="1" type="primary">argJ</name>
    <name type="ordered locus">NE2213</name>
</gene>
<organism>
    <name type="scientific">Nitrosomonas europaea (strain ATCC 19718 / CIP 103999 / KCTC 2705 / NBRC 14298)</name>
    <dbReference type="NCBI Taxonomy" id="228410"/>
    <lineage>
        <taxon>Bacteria</taxon>
        <taxon>Pseudomonadati</taxon>
        <taxon>Pseudomonadota</taxon>
        <taxon>Betaproteobacteria</taxon>
        <taxon>Nitrosomonadales</taxon>
        <taxon>Nitrosomonadaceae</taxon>
        <taxon>Nitrosomonas</taxon>
    </lineage>
</organism>
<protein>
    <recommendedName>
        <fullName evidence="1">Arginine biosynthesis bifunctional protein ArgJ</fullName>
    </recommendedName>
    <domain>
        <recommendedName>
            <fullName evidence="1">Glutamate N-acetyltransferase</fullName>
            <ecNumber evidence="1">2.3.1.35</ecNumber>
        </recommendedName>
        <alternativeName>
            <fullName evidence="1">Ornithine acetyltransferase</fullName>
            <shortName evidence="1">OATase</shortName>
        </alternativeName>
        <alternativeName>
            <fullName evidence="1">Ornithine transacetylase</fullName>
        </alternativeName>
    </domain>
    <domain>
        <recommendedName>
            <fullName evidence="1">Amino-acid acetyltransferase</fullName>
            <ecNumber evidence="1">2.3.1.1</ecNumber>
        </recommendedName>
        <alternativeName>
            <fullName evidence="1">N-acetylglutamate synthase</fullName>
            <shortName evidence="1">AGSase</shortName>
        </alternativeName>
    </domain>
    <component>
        <recommendedName>
            <fullName evidence="1">Arginine biosynthesis bifunctional protein ArgJ alpha chain</fullName>
        </recommendedName>
    </component>
    <component>
        <recommendedName>
            <fullName evidence="1">Arginine biosynthesis bifunctional protein ArgJ beta chain</fullName>
        </recommendedName>
    </component>
</protein>
<dbReference type="EC" id="2.3.1.35" evidence="1"/>
<dbReference type="EC" id="2.3.1.1" evidence="1"/>
<dbReference type="EMBL" id="AL954747">
    <property type="protein sequence ID" value="CAD86125.1"/>
    <property type="molecule type" value="Genomic_DNA"/>
</dbReference>
<dbReference type="RefSeq" id="WP_011112706.1">
    <property type="nucleotide sequence ID" value="NC_004757.1"/>
</dbReference>
<dbReference type="SMR" id="Q82SU1"/>
<dbReference type="STRING" id="228410.NE2213"/>
<dbReference type="MEROPS" id="T05.001"/>
<dbReference type="GeneID" id="87105348"/>
<dbReference type="KEGG" id="neu:NE2213"/>
<dbReference type="eggNOG" id="COG1364">
    <property type="taxonomic scope" value="Bacteria"/>
</dbReference>
<dbReference type="HOGENOM" id="CLU_027172_1_0_4"/>
<dbReference type="OrthoDB" id="9804242at2"/>
<dbReference type="PhylomeDB" id="Q82SU1"/>
<dbReference type="UniPathway" id="UPA00068">
    <property type="reaction ID" value="UER00106"/>
</dbReference>
<dbReference type="UniPathway" id="UPA00068">
    <property type="reaction ID" value="UER00111"/>
</dbReference>
<dbReference type="Proteomes" id="UP000001416">
    <property type="component" value="Chromosome"/>
</dbReference>
<dbReference type="GO" id="GO:0005737">
    <property type="term" value="C:cytoplasm"/>
    <property type="evidence" value="ECO:0007669"/>
    <property type="project" value="UniProtKB-SubCell"/>
</dbReference>
<dbReference type="GO" id="GO:0004358">
    <property type="term" value="F:glutamate N-acetyltransferase activity"/>
    <property type="evidence" value="ECO:0007669"/>
    <property type="project" value="UniProtKB-UniRule"/>
</dbReference>
<dbReference type="GO" id="GO:0004042">
    <property type="term" value="F:L-glutamate N-acetyltransferase activity"/>
    <property type="evidence" value="ECO:0007669"/>
    <property type="project" value="UniProtKB-UniRule"/>
</dbReference>
<dbReference type="GO" id="GO:0006526">
    <property type="term" value="P:L-arginine biosynthetic process"/>
    <property type="evidence" value="ECO:0007669"/>
    <property type="project" value="UniProtKB-UniRule"/>
</dbReference>
<dbReference type="GO" id="GO:0006592">
    <property type="term" value="P:ornithine biosynthetic process"/>
    <property type="evidence" value="ECO:0007669"/>
    <property type="project" value="TreeGrafter"/>
</dbReference>
<dbReference type="CDD" id="cd02152">
    <property type="entry name" value="OAT"/>
    <property type="match status" value="1"/>
</dbReference>
<dbReference type="FunFam" id="3.10.20.340:FF:000001">
    <property type="entry name" value="Arginine biosynthesis bifunctional protein ArgJ, chloroplastic"/>
    <property type="match status" value="1"/>
</dbReference>
<dbReference type="FunFam" id="3.60.70.12:FF:000001">
    <property type="entry name" value="Arginine biosynthesis bifunctional protein ArgJ, chloroplastic"/>
    <property type="match status" value="1"/>
</dbReference>
<dbReference type="Gene3D" id="3.10.20.340">
    <property type="entry name" value="ArgJ beta chain, C-terminal domain"/>
    <property type="match status" value="1"/>
</dbReference>
<dbReference type="Gene3D" id="3.60.70.12">
    <property type="entry name" value="L-amino peptidase D-ALA esterase/amidase"/>
    <property type="match status" value="1"/>
</dbReference>
<dbReference type="HAMAP" id="MF_01106">
    <property type="entry name" value="ArgJ"/>
    <property type="match status" value="1"/>
</dbReference>
<dbReference type="InterPro" id="IPR002813">
    <property type="entry name" value="Arg_biosynth_ArgJ"/>
</dbReference>
<dbReference type="InterPro" id="IPR016117">
    <property type="entry name" value="ArgJ-like_dom_sf"/>
</dbReference>
<dbReference type="InterPro" id="IPR042195">
    <property type="entry name" value="ArgJ_beta_C"/>
</dbReference>
<dbReference type="NCBIfam" id="TIGR00120">
    <property type="entry name" value="ArgJ"/>
    <property type="match status" value="1"/>
</dbReference>
<dbReference type="NCBIfam" id="NF003802">
    <property type="entry name" value="PRK05388.1"/>
    <property type="match status" value="1"/>
</dbReference>
<dbReference type="PANTHER" id="PTHR23100">
    <property type="entry name" value="ARGININE BIOSYNTHESIS BIFUNCTIONAL PROTEIN ARGJ"/>
    <property type="match status" value="1"/>
</dbReference>
<dbReference type="PANTHER" id="PTHR23100:SF0">
    <property type="entry name" value="ARGININE BIOSYNTHESIS BIFUNCTIONAL PROTEIN ARGJ, MITOCHONDRIAL"/>
    <property type="match status" value="1"/>
</dbReference>
<dbReference type="Pfam" id="PF01960">
    <property type="entry name" value="ArgJ"/>
    <property type="match status" value="1"/>
</dbReference>
<dbReference type="SUPFAM" id="SSF56266">
    <property type="entry name" value="DmpA/ArgJ-like"/>
    <property type="match status" value="1"/>
</dbReference>
<keyword id="KW-0012">Acyltransferase</keyword>
<keyword id="KW-0028">Amino-acid biosynthesis</keyword>
<keyword id="KW-0055">Arginine biosynthesis</keyword>
<keyword id="KW-0068">Autocatalytic cleavage</keyword>
<keyword id="KW-0963">Cytoplasm</keyword>
<keyword id="KW-0511">Multifunctional enzyme</keyword>
<keyword id="KW-1185">Reference proteome</keyword>
<keyword id="KW-0808">Transferase</keyword>
<reference key="1">
    <citation type="journal article" date="2003" name="J. Bacteriol.">
        <title>Complete genome sequence of the ammonia-oxidizing bacterium and obligate chemolithoautotroph Nitrosomonas europaea.</title>
        <authorList>
            <person name="Chain P."/>
            <person name="Lamerdin J.E."/>
            <person name="Larimer F.W."/>
            <person name="Regala W."/>
            <person name="Lao V."/>
            <person name="Land M.L."/>
            <person name="Hauser L."/>
            <person name="Hooper A.B."/>
            <person name="Klotz M.G."/>
            <person name="Norton J."/>
            <person name="Sayavedra-Soto L.A."/>
            <person name="Arciero D.M."/>
            <person name="Hommes N.G."/>
            <person name="Whittaker M.M."/>
            <person name="Arp D.J."/>
        </authorList>
    </citation>
    <scope>NUCLEOTIDE SEQUENCE [LARGE SCALE GENOMIC DNA]</scope>
    <source>
        <strain>ATCC 19718 / CIP 103999 / KCTC 2705 / NBRC 14298</strain>
    </source>
</reference>
<feature type="chain" id="PRO_0000002203" description="Arginine biosynthesis bifunctional protein ArgJ alpha chain" evidence="1">
    <location>
        <begin position="1"/>
        <end position="192"/>
    </location>
</feature>
<feature type="chain" id="PRO_0000002204" description="Arginine biosynthesis bifunctional protein ArgJ beta chain" evidence="1">
    <location>
        <begin position="193"/>
        <end position="409"/>
    </location>
</feature>
<feature type="active site" description="Nucleophile" evidence="1">
    <location>
        <position position="193"/>
    </location>
</feature>
<feature type="binding site" evidence="1">
    <location>
        <position position="156"/>
    </location>
    <ligand>
        <name>substrate</name>
    </ligand>
</feature>
<feature type="binding site" evidence="1">
    <location>
        <position position="182"/>
    </location>
    <ligand>
        <name>substrate</name>
    </ligand>
</feature>
<feature type="binding site" evidence="1">
    <location>
        <position position="193"/>
    </location>
    <ligand>
        <name>substrate</name>
    </ligand>
</feature>
<feature type="binding site" evidence="1">
    <location>
        <position position="280"/>
    </location>
    <ligand>
        <name>substrate</name>
    </ligand>
</feature>
<feature type="binding site" evidence="1">
    <location>
        <position position="404"/>
    </location>
    <ligand>
        <name>substrate</name>
    </ligand>
</feature>
<feature type="binding site" evidence="1">
    <location>
        <position position="409"/>
    </location>
    <ligand>
        <name>substrate</name>
    </ligand>
</feature>
<feature type="site" description="Involved in the stabilization of negative charge on the oxyanion by the formation of the oxyanion hole" evidence="1">
    <location>
        <position position="119"/>
    </location>
</feature>
<feature type="site" description="Involved in the stabilization of negative charge on the oxyanion by the formation of the oxyanion hole" evidence="1">
    <location>
        <position position="120"/>
    </location>
</feature>
<feature type="site" description="Cleavage; by autolysis" evidence="1">
    <location>
        <begin position="192"/>
        <end position="193"/>
    </location>
</feature>
<evidence type="ECO:0000255" key="1">
    <source>
        <dbReference type="HAMAP-Rule" id="MF_01106"/>
    </source>
</evidence>